<dbReference type="EMBL" id="AE014075">
    <property type="protein sequence ID" value="AAN80388.1"/>
    <property type="molecule type" value="Genomic_DNA"/>
</dbReference>
<dbReference type="RefSeq" id="WP_000726730.1">
    <property type="nucleotide sequence ID" value="NC_004431.1"/>
</dbReference>
<dbReference type="SMR" id="Q8FHF8"/>
<dbReference type="STRING" id="199310.c1930"/>
<dbReference type="KEGG" id="ecc:c1930"/>
<dbReference type="eggNOG" id="COG0243">
    <property type="taxonomic scope" value="Bacteria"/>
</dbReference>
<dbReference type="HOGENOM" id="CLU_000422_16_1_6"/>
<dbReference type="BioCyc" id="ECOL199310:C1930-MONOMER"/>
<dbReference type="Proteomes" id="UP000001410">
    <property type="component" value="Chromosome"/>
</dbReference>
<dbReference type="GO" id="GO:0016020">
    <property type="term" value="C:membrane"/>
    <property type="evidence" value="ECO:0007669"/>
    <property type="project" value="TreeGrafter"/>
</dbReference>
<dbReference type="GO" id="GO:0051539">
    <property type="term" value="F:4 iron, 4 sulfur cluster binding"/>
    <property type="evidence" value="ECO:0007669"/>
    <property type="project" value="UniProtKB-KW"/>
</dbReference>
<dbReference type="GO" id="GO:0008863">
    <property type="term" value="F:formate dehydrogenase (NAD+) activity"/>
    <property type="evidence" value="ECO:0007669"/>
    <property type="project" value="InterPro"/>
</dbReference>
<dbReference type="GO" id="GO:0030151">
    <property type="term" value="F:molybdenum ion binding"/>
    <property type="evidence" value="ECO:0007669"/>
    <property type="project" value="InterPro"/>
</dbReference>
<dbReference type="CDD" id="cd02787">
    <property type="entry name" value="MopB_CT_ydeP"/>
    <property type="match status" value="1"/>
</dbReference>
<dbReference type="CDD" id="cd02767">
    <property type="entry name" value="MopB_ydeP"/>
    <property type="match status" value="1"/>
</dbReference>
<dbReference type="Gene3D" id="3.40.50.740">
    <property type="match status" value="1"/>
</dbReference>
<dbReference type="Gene3D" id="3.40.228.10">
    <property type="entry name" value="Dimethylsulfoxide Reductase, domain 2"/>
    <property type="match status" value="1"/>
</dbReference>
<dbReference type="InterPro" id="IPR009010">
    <property type="entry name" value="Asp_de-COase-like_dom_sf"/>
</dbReference>
<dbReference type="InterPro" id="IPR037951">
    <property type="entry name" value="MopB_CT_YdeP"/>
</dbReference>
<dbReference type="InterPro" id="IPR006656">
    <property type="entry name" value="Mopterin_OxRdtase"/>
</dbReference>
<dbReference type="InterPro" id="IPR010046">
    <property type="entry name" value="Mopterin_OxRdtse_a_bac"/>
</dbReference>
<dbReference type="InterPro" id="IPR050123">
    <property type="entry name" value="Prok_molybdopt-oxidoreductase"/>
</dbReference>
<dbReference type="InterPro" id="IPR041953">
    <property type="entry name" value="YdeP_MopB"/>
</dbReference>
<dbReference type="NCBIfam" id="TIGR01701">
    <property type="entry name" value="Fdhalpha-like"/>
    <property type="match status" value="1"/>
</dbReference>
<dbReference type="NCBIfam" id="NF007406">
    <property type="entry name" value="PRK09939.1"/>
    <property type="match status" value="1"/>
</dbReference>
<dbReference type="PANTHER" id="PTHR43105:SF4">
    <property type="entry name" value="PROTEIN YDEP"/>
    <property type="match status" value="1"/>
</dbReference>
<dbReference type="PANTHER" id="PTHR43105">
    <property type="entry name" value="RESPIRATORY NITRATE REDUCTASE"/>
    <property type="match status" value="1"/>
</dbReference>
<dbReference type="Pfam" id="PF00384">
    <property type="entry name" value="Molybdopterin"/>
    <property type="match status" value="1"/>
</dbReference>
<dbReference type="PIRSF" id="PIRSF000144">
    <property type="entry name" value="CbbBc"/>
    <property type="match status" value="1"/>
</dbReference>
<dbReference type="SUPFAM" id="SSF50692">
    <property type="entry name" value="ADC-like"/>
    <property type="match status" value="1"/>
</dbReference>
<dbReference type="SUPFAM" id="SSF53706">
    <property type="entry name" value="Formate dehydrogenase/DMSO reductase, domains 1-3"/>
    <property type="match status" value="1"/>
</dbReference>
<comment type="function">
    <text evidence="1">Probably involved in acid resistance.</text>
</comment>
<comment type="cofactor">
    <cofactor evidence="2">
        <name>[4Fe-4S] cluster</name>
        <dbReference type="ChEBI" id="CHEBI:49883"/>
    </cofactor>
    <text evidence="2">Binds 1 [4Fe-4S] cluster.</text>
</comment>
<comment type="cofactor">
    <cofactor evidence="1">
        <name>Mo-bis(molybdopterin guanine dinucleotide)</name>
        <dbReference type="ChEBI" id="CHEBI:60539"/>
    </cofactor>
    <text evidence="1">Binds 1 molybdenum-bis(molybdopterin guanine dinucleotide) (Mo-bis-MGD) cofactor per subunit.</text>
</comment>
<comment type="induction">
    <text evidence="1">By EvgA.</text>
</comment>
<comment type="similarity">
    <text evidence="2">Belongs to the prokaryotic molybdopterin-containing oxidoreductase family.</text>
</comment>
<organism>
    <name type="scientific">Escherichia coli O6:H1 (strain CFT073 / ATCC 700928 / UPEC)</name>
    <dbReference type="NCBI Taxonomy" id="199310"/>
    <lineage>
        <taxon>Bacteria</taxon>
        <taxon>Pseudomonadati</taxon>
        <taxon>Pseudomonadota</taxon>
        <taxon>Gammaproteobacteria</taxon>
        <taxon>Enterobacterales</taxon>
        <taxon>Enterobacteriaceae</taxon>
        <taxon>Escherichia</taxon>
    </lineage>
</organism>
<protein>
    <recommendedName>
        <fullName>Protein YdeP</fullName>
    </recommendedName>
</protein>
<evidence type="ECO:0000250" key="1"/>
<evidence type="ECO:0000305" key="2"/>
<gene>
    <name type="primary">ydeP</name>
    <name type="ordered locus">c1930</name>
</gene>
<feature type="chain" id="PRO_0000063228" description="Protein YdeP">
    <location>
        <begin position="1"/>
        <end position="759"/>
    </location>
</feature>
<feature type="binding site" evidence="1">
    <location>
        <position position="49"/>
    </location>
    <ligand>
        <name>[4Fe-4S] cluster</name>
        <dbReference type="ChEBI" id="CHEBI:49883"/>
    </ligand>
</feature>
<feature type="binding site" evidence="1">
    <location>
        <position position="52"/>
    </location>
    <ligand>
        <name>[4Fe-4S] cluster</name>
        <dbReference type="ChEBI" id="CHEBI:49883"/>
    </ligand>
</feature>
<sequence>MKKKIESYQGAAGGWGAVKSVANAVRKQMDIRQDVIAMFDMNKPEGFDCPGCAWPDPKHSASFDICENGAKAIAWEVTDKQVNASFFAENTVQSLLTWGDHELEAAGRLTQPLKYDDVSDCYKPLSWQQAFDEIGARLQSYSDPNQVEFYTSGRTSNEAAFLYQLFAREYRSNNFPDCSNMCHEPTSVGLAASIGVGKGTVLLEDFEKCDLVICIGHNPGTNHPRMLTSLRALVKRGAKMIAINPLQERGLERFTAPQNPFEMLTNSETQLASAYYNVRIGGDMALLKGMMRLLIERDDAASAAGRPSLLDDEFIQTHTVGFDELRRDVLNSEWKDIERISGLSQTQIAELADAYAAAERTIICYGMGITQHEHGTQNVQQLVNLLLMKGNIGKPGAGICPLRGHSNVQGDRTVGITEKPSAEFLDRLCERYGFTPPHAPGHAAIASMQAICTGQARALICMGGNFALAMPDREASAVPLTQLDLAVHVATKLNRSHLLTARHSYILPVLGRSEIDMQKSGAQAVTVEDSMSMIHASRGVLKPAGVMLKSECAVVAGIAQAALPQSVVAWEYLVEDYDRIRNDIEAVLPEFADYNQRIRHPGGFHLINAAAERRWMTSSGKANFITSKGLLEDPSSAFNSKLVMATVRSHDQYNTTIYGMDDRYRGVFGQRDVVFMSAKQAKICRVKNGERVNLIALTPDGKRSSRRMDRLKVVIYPMADRSLVTYFPESNHMLTLDNHDPLSGIPGYKSIPVELEPSN</sequence>
<accession>Q8FHF8</accession>
<name>YDEP_ECOL6</name>
<keyword id="KW-0004">4Fe-4S</keyword>
<keyword id="KW-0408">Iron</keyword>
<keyword id="KW-0411">Iron-sulfur</keyword>
<keyword id="KW-0479">Metal-binding</keyword>
<keyword id="KW-0500">Molybdenum</keyword>
<keyword id="KW-0560">Oxidoreductase</keyword>
<keyword id="KW-1185">Reference proteome</keyword>
<proteinExistence type="inferred from homology"/>
<reference key="1">
    <citation type="journal article" date="2002" name="Proc. Natl. Acad. Sci. U.S.A.">
        <title>Extensive mosaic structure revealed by the complete genome sequence of uropathogenic Escherichia coli.</title>
        <authorList>
            <person name="Welch R.A."/>
            <person name="Burland V."/>
            <person name="Plunkett G. III"/>
            <person name="Redford P."/>
            <person name="Roesch P."/>
            <person name="Rasko D."/>
            <person name="Buckles E.L."/>
            <person name="Liou S.-R."/>
            <person name="Boutin A."/>
            <person name="Hackett J."/>
            <person name="Stroud D."/>
            <person name="Mayhew G.F."/>
            <person name="Rose D.J."/>
            <person name="Zhou S."/>
            <person name="Schwartz D.C."/>
            <person name="Perna N.T."/>
            <person name="Mobley H.L.T."/>
            <person name="Donnenberg M.S."/>
            <person name="Blattner F.R."/>
        </authorList>
    </citation>
    <scope>NUCLEOTIDE SEQUENCE [LARGE SCALE GENOMIC DNA]</scope>
    <source>
        <strain>CFT073 / ATCC 700928 / UPEC</strain>
    </source>
</reference>